<evidence type="ECO:0000250" key="1"/>
<evidence type="ECO:0000269" key="2">
    <source>
    </source>
</evidence>
<evidence type="ECO:0000269" key="3">
    <source>
    </source>
</evidence>
<evidence type="ECO:0000269" key="4">
    <source>
    </source>
</evidence>
<evidence type="ECO:0000305" key="5"/>
<accession>P32838</accession>
<accession>D6W1K6</accession>
<accession>E9P8U5</accession>
<sequence length="368" mass="42433">MELDECLERLYKAQLLPEVTVRALCFKLKEMLVKESNVIHIQTPVTVVGDMHGQFHDMLEIFQIGGPVPDTNYLFLGDYVDRGLYSVETIMLLIVLKLRYPSRIHLLRGNHESRQITQSYGFYTECLNKYGGNSRVWQYLTDIFDYLVLCCIIDDEIFCVHGGLSPNVQTIDQIKIIDRFREIPHDGAMADLVWSDPEENNNPTLDHPDNSGQHFQVSPRGAGYTFGRSVVEKFLRMNDMNRIYRAHQLCNEGYQIYFDGLVTTVWSAPNYCYRCGNKASILELYSKDQFYFNVFEEAPENKLLKENSMNDNALEDSISNPVANRKLIADYFEDDSASADGSTDPEMYIFSDVYQARSASNRHVDYFL</sequence>
<name>PP2A4_YEAST</name>
<gene>
    <name type="primary">PPG1</name>
    <name type="synonym">PPG</name>
    <name type="ordered locus">YNR032W</name>
    <name type="ORF">N3281</name>
</gene>
<protein>
    <recommendedName>
        <fullName>Serine/threonine-protein phosphatase PP2A-like PPG1</fullName>
        <ecNumber>3.1.3.16</ecNumber>
    </recommendedName>
</protein>
<organism>
    <name type="scientific">Saccharomyces cerevisiae (strain ATCC 204508 / S288c)</name>
    <name type="common">Baker's yeast</name>
    <dbReference type="NCBI Taxonomy" id="559292"/>
    <lineage>
        <taxon>Eukaryota</taxon>
        <taxon>Fungi</taxon>
        <taxon>Dikarya</taxon>
        <taxon>Ascomycota</taxon>
        <taxon>Saccharomycotina</taxon>
        <taxon>Saccharomycetes</taxon>
        <taxon>Saccharomycetales</taxon>
        <taxon>Saccharomycetaceae</taxon>
        <taxon>Saccharomyces</taxon>
    </lineage>
</organism>
<keyword id="KW-0378">Hydrolase</keyword>
<keyword id="KW-0464">Manganese</keyword>
<keyword id="KW-0479">Metal-binding</keyword>
<keyword id="KW-0488">Methylation</keyword>
<keyword id="KW-0904">Protein phosphatase</keyword>
<keyword id="KW-1185">Reference proteome</keyword>
<comment type="function">
    <text>Involved in glycogen accumulation.</text>
</comment>
<comment type="catalytic activity">
    <reaction>
        <text>O-phospho-L-seryl-[protein] + H2O = L-seryl-[protein] + phosphate</text>
        <dbReference type="Rhea" id="RHEA:20629"/>
        <dbReference type="Rhea" id="RHEA-COMP:9863"/>
        <dbReference type="Rhea" id="RHEA-COMP:11604"/>
        <dbReference type="ChEBI" id="CHEBI:15377"/>
        <dbReference type="ChEBI" id="CHEBI:29999"/>
        <dbReference type="ChEBI" id="CHEBI:43474"/>
        <dbReference type="ChEBI" id="CHEBI:83421"/>
        <dbReference type="EC" id="3.1.3.16"/>
    </reaction>
</comment>
<comment type="catalytic activity">
    <reaction>
        <text>O-phospho-L-threonyl-[protein] + H2O = L-threonyl-[protein] + phosphate</text>
        <dbReference type="Rhea" id="RHEA:47004"/>
        <dbReference type="Rhea" id="RHEA-COMP:11060"/>
        <dbReference type="Rhea" id="RHEA-COMP:11605"/>
        <dbReference type="ChEBI" id="CHEBI:15377"/>
        <dbReference type="ChEBI" id="CHEBI:30013"/>
        <dbReference type="ChEBI" id="CHEBI:43474"/>
        <dbReference type="ChEBI" id="CHEBI:61977"/>
        <dbReference type="EC" id="3.1.3.16"/>
    </reaction>
</comment>
<comment type="cofactor">
    <cofactor evidence="1">
        <name>Mn(2+)</name>
        <dbReference type="ChEBI" id="CHEBI:29035"/>
    </cofactor>
    <text evidence="1">Binds 2 manganese ions per subunit.</text>
</comment>
<comment type="subunit">
    <text evidence="2 4">Inactivated in a complex with phosphatase methylesterase PPE1 (PP2Ai). Interacts with phosphatase 2A activator RRD1, which can reactivate PP2Ai by dissociating the catalytic subunit from the complex. Interacts with TAP42.</text>
</comment>
<comment type="PTM">
    <text>Reversibly methyl esterified on Leu-368 by leucine carboxyl methyltransferase 1 (PPM1) and protein phosphatase methylesterase 1 (PPE1). Carboxyl methylation influences the affinity of the catalytic subunit for the different regulatory subunits, thereby modulating the PP2A holoenzyme's substrate specificity, enzyme activity and cellular localization.</text>
</comment>
<comment type="miscellaneous">
    <text evidence="3">Present with 1960 molecules/cell in log phase SD medium.</text>
</comment>
<comment type="similarity">
    <text evidence="5">Belongs to the PPP phosphatase family. PP-2A subfamily.</text>
</comment>
<proteinExistence type="evidence at protein level"/>
<dbReference type="EC" id="3.1.3.16"/>
<dbReference type="EMBL" id="M94269">
    <property type="protein sequence ID" value="AAA34895.1"/>
    <property type="molecule type" value="Genomic_DNA"/>
</dbReference>
<dbReference type="EMBL" id="Z71647">
    <property type="protein sequence ID" value="CAA96312.1"/>
    <property type="molecule type" value="Genomic_DNA"/>
</dbReference>
<dbReference type="EMBL" id="AY558021">
    <property type="protein sequence ID" value="AAS56347.1"/>
    <property type="molecule type" value="Genomic_DNA"/>
</dbReference>
<dbReference type="EMBL" id="BK006947">
    <property type="protein sequence ID" value="DAA10572.1"/>
    <property type="molecule type" value="Genomic_DNA"/>
</dbReference>
<dbReference type="PIR" id="S63363">
    <property type="entry name" value="S63363"/>
</dbReference>
<dbReference type="RefSeq" id="NP_014429.3">
    <property type="nucleotide sequence ID" value="NM_001183209.3"/>
</dbReference>
<dbReference type="SMR" id="P32838"/>
<dbReference type="BioGRID" id="35856">
    <property type="interactions" value="230"/>
</dbReference>
<dbReference type="DIP" id="DIP-1523N"/>
<dbReference type="FunCoup" id="P32838">
    <property type="interactions" value="80"/>
</dbReference>
<dbReference type="IntAct" id="P32838">
    <property type="interactions" value="15"/>
</dbReference>
<dbReference type="MINT" id="P32838"/>
<dbReference type="STRING" id="4932.YNR032W"/>
<dbReference type="iPTMnet" id="P32838"/>
<dbReference type="PaxDb" id="4932-YNR032W"/>
<dbReference type="PeptideAtlas" id="P32838"/>
<dbReference type="TopDownProteomics" id="P32838"/>
<dbReference type="EnsemblFungi" id="YNR032W_mRNA">
    <property type="protein sequence ID" value="YNR032W"/>
    <property type="gene ID" value="YNR032W"/>
</dbReference>
<dbReference type="GeneID" id="855766"/>
<dbReference type="KEGG" id="sce:YNR032W"/>
<dbReference type="AGR" id="SGD:S000005315"/>
<dbReference type="SGD" id="S000005315">
    <property type="gene designation" value="PPG1"/>
</dbReference>
<dbReference type="VEuPathDB" id="FungiDB:YNR032W"/>
<dbReference type="eggNOG" id="KOG0372">
    <property type="taxonomic scope" value="Eukaryota"/>
</dbReference>
<dbReference type="GeneTree" id="ENSGT00960000189235"/>
<dbReference type="HOGENOM" id="CLU_004962_8_1_1"/>
<dbReference type="InParanoid" id="P32838"/>
<dbReference type="OMA" id="KIGGYPP"/>
<dbReference type="OrthoDB" id="1930084at2759"/>
<dbReference type="BioCyc" id="YEAST:G3O-33343-MONOMER"/>
<dbReference type="BioGRID-ORCS" id="855766">
    <property type="hits" value="1 hit in 10 CRISPR screens"/>
</dbReference>
<dbReference type="PRO" id="PR:P32838"/>
<dbReference type="Proteomes" id="UP000002311">
    <property type="component" value="Chromosome XIV"/>
</dbReference>
<dbReference type="RNAct" id="P32838">
    <property type="molecule type" value="protein"/>
</dbReference>
<dbReference type="GO" id="GO:0005737">
    <property type="term" value="C:cytoplasm"/>
    <property type="evidence" value="ECO:0007005"/>
    <property type="project" value="SGD"/>
</dbReference>
<dbReference type="GO" id="GO:0090443">
    <property type="term" value="C:FAR/SIN/STRIPAK complex"/>
    <property type="evidence" value="ECO:0000318"/>
    <property type="project" value="GO_Central"/>
</dbReference>
<dbReference type="GO" id="GO:0005741">
    <property type="term" value="C:mitochondrial outer membrane"/>
    <property type="evidence" value="ECO:0000314"/>
    <property type="project" value="SGD"/>
</dbReference>
<dbReference type="GO" id="GO:0005634">
    <property type="term" value="C:nucleus"/>
    <property type="evidence" value="ECO:0007005"/>
    <property type="project" value="SGD"/>
</dbReference>
<dbReference type="GO" id="GO:0046872">
    <property type="term" value="F:metal ion binding"/>
    <property type="evidence" value="ECO:0007669"/>
    <property type="project" value="UniProtKB-KW"/>
</dbReference>
<dbReference type="GO" id="GO:0004722">
    <property type="term" value="F:protein serine/threonine phosphatase activity"/>
    <property type="evidence" value="ECO:0000315"/>
    <property type="project" value="SGD"/>
</dbReference>
<dbReference type="GO" id="GO:0061509">
    <property type="term" value="P:asymmetric protein localization to old mitotic spindle pole body"/>
    <property type="evidence" value="ECO:0000318"/>
    <property type="project" value="GO_Central"/>
</dbReference>
<dbReference type="GO" id="GO:0005977">
    <property type="term" value="P:glycogen metabolic process"/>
    <property type="evidence" value="ECO:0000315"/>
    <property type="project" value="SGD"/>
</dbReference>
<dbReference type="GO" id="GO:1901525">
    <property type="term" value="P:negative regulation of mitophagy"/>
    <property type="evidence" value="ECO:0000315"/>
    <property type="project" value="SGD"/>
</dbReference>
<dbReference type="CDD" id="cd07415">
    <property type="entry name" value="MPP_PP2A_PP4_PP6"/>
    <property type="match status" value="1"/>
</dbReference>
<dbReference type="FunFam" id="3.60.21.10:FF:000040">
    <property type="entry name" value="Serine/threonine-protein phosphatase"/>
    <property type="match status" value="1"/>
</dbReference>
<dbReference type="Gene3D" id="3.60.21.10">
    <property type="match status" value="1"/>
</dbReference>
<dbReference type="InterPro" id="IPR004843">
    <property type="entry name" value="Calcineurin-like_PHP_ApaH"/>
</dbReference>
<dbReference type="InterPro" id="IPR029052">
    <property type="entry name" value="Metallo-depent_PP-like"/>
</dbReference>
<dbReference type="InterPro" id="IPR047129">
    <property type="entry name" value="PPA2-like"/>
</dbReference>
<dbReference type="InterPro" id="IPR006186">
    <property type="entry name" value="Ser/Thr-sp_prot-phosphatase"/>
</dbReference>
<dbReference type="PANTHER" id="PTHR45619">
    <property type="entry name" value="SERINE/THREONINE-PROTEIN PHOSPHATASE PP2A-RELATED"/>
    <property type="match status" value="1"/>
</dbReference>
<dbReference type="Pfam" id="PF00149">
    <property type="entry name" value="Metallophos"/>
    <property type="match status" value="1"/>
</dbReference>
<dbReference type="PIRSF" id="PIRSF033096">
    <property type="entry name" value="PPPtase_5"/>
    <property type="match status" value="1"/>
</dbReference>
<dbReference type="PRINTS" id="PR00114">
    <property type="entry name" value="STPHPHTASE"/>
</dbReference>
<dbReference type="SMART" id="SM00156">
    <property type="entry name" value="PP2Ac"/>
    <property type="match status" value="1"/>
</dbReference>
<dbReference type="SUPFAM" id="SSF56300">
    <property type="entry name" value="Metallo-dependent phosphatases"/>
    <property type="match status" value="1"/>
</dbReference>
<dbReference type="PROSITE" id="PS00125">
    <property type="entry name" value="SER_THR_PHOSPHATASE"/>
    <property type="match status" value="1"/>
</dbReference>
<reference key="1">
    <citation type="journal article" date="1993" name="J. Biol. Chem.">
        <title>The gene PPG encodes a novel yeast protein phosphatase involved in glycogen accumulation.</title>
        <authorList>
            <person name="Posas F."/>
            <person name="Clotet J."/>
            <person name="Muns M.T."/>
            <person name="Corominas J."/>
            <person name="Casamayor A."/>
            <person name="Arino J."/>
        </authorList>
    </citation>
    <scope>NUCLEOTIDE SEQUENCE [GENOMIC DNA]</scope>
</reference>
<reference key="2">
    <citation type="journal article" date="1997" name="Nature">
        <title>The nucleotide sequence of Saccharomyces cerevisiae chromosome XIV and its evolutionary implications.</title>
        <authorList>
            <person name="Philippsen P."/>
            <person name="Kleine K."/>
            <person name="Poehlmann R."/>
            <person name="Duesterhoeft A."/>
            <person name="Hamberg K."/>
            <person name="Hegemann J.H."/>
            <person name="Obermaier B."/>
            <person name="Urrestarazu L.A."/>
            <person name="Aert R."/>
            <person name="Albermann K."/>
            <person name="Altmann R."/>
            <person name="Andre B."/>
            <person name="Baladron V."/>
            <person name="Ballesta J.P.G."/>
            <person name="Becam A.-M."/>
            <person name="Beinhauer J.D."/>
            <person name="Boskovic J."/>
            <person name="Buitrago M.J."/>
            <person name="Bussereau F."/>
            <person name="Coster F."/>
            <person name="Crouzet M."/>
            <person name="D'Angelo M."/>
            <person name="Dal Pero F."/>
            <person name="De Antoni A."/>
            <person name="del Rey F."/>
            <person name="Doignon F."/>
            <person name="Domdey H."/>
            <person name="Dubois E."/>
            <person name="Fiedler T.A."/>
            <person name="Fleig U."/>
            <person name="Floeth M."/>
            <person name="Fritz C."/>
            <person name="Gaillardin C."/>
            <person name="Garcia-Cantalejo J.M."/>
            <person name="Glansdorff N."/>
            <person name="Goffeau A."/>
            <person name="Gueldener U."/>
            <person name="Herbert C.J."/>
            <person name="Heumann K."/>
            <person name="Heuss-Neitzel D."/>
            <person name="Hilbert H."/>
            <person name="Hinni K."/>
            <person name="Iraqui Houssaini I."/>
            <person name="Jacquet M."/>
            <person name="Jimenez A."/>
            <person name="Jonniaux J.-L."/>
            <person name="Karpfinger-Hartl L."/>
            <person name="Lanfranchi G."/>
            <person name="Lepingle A."/>
            <person name="Levesque H."/>
            <person name="Lyck R."/>
            <person name="Maftahi M."/>
            <person name="Mallet L."/>
            <person name="Maurer C.T.C."/>
            <person name="Messenguy F."/>
            <person name="Mewes H.-W."/>
            <person name="Moestl D."/>
            <person name="Nasr F."/>
            <person name="Nicaud J.-M."/>
            <person name="Niedenthal R.K."/>
            <person name="Pandolfo D."/>
            <person name="Pierard A."/>
            <person name="Piravandi E."/>
            <person name="Planta R.J."/>
            <person name="Pohl T.M."/>
            <person name="Purnelle B."/>
            <person name="Rebischung C."/>
            <person name="Remacha M.A."/>
            <person name="Revuelta J.L."/>
            <person name="Rinke M."/>
            <person name="Saiz J.E."/>
            <person name="Sartorello F."/>
            <person name="Scherens B."/>
            <person name="Sen-Gupta M."/>
            <person name="Soler-Mira A."/>
            <person name="Urbanus J.H.M."/>
            <person name="Valle G."/>
            <person name="Van Dyck L."/>
            <person name="Verhasselt P."/>
            <person name="Vierendeels F."/>
            <person name="Vissers S."/>
            <person name="Voet M."/>
            <person name="Volckaert G."/>
            <person name="Wach A."/>
            <person name="Wambutt R."/>
            <person name="Wedler H."/>
            <person name="Zollner A."/>
            <person name="Hani J."/>
        </authorList>
    </citation>
    <scope>NUCLEOTIDE SEQUENCE [LARGE SCALE GENOMIC DNA]</scope>
    <source>
        <strain>ATCC 204508 / S288c</strain>
    </source>
</reference>
<reference key="3">
    <citation type="journal article" date="2014" name="G3 (Bethesda)">
        <title>The reference genome sequence of Saccharomyces cerevisiae: Then and now.</title>
        <authorList>
            <person name="Engel S.R."/>
            <person name="Dietrich F.S."/>
            <person name="Fisk D.G."/>
            <person name="Binkley G."/>
            <person name="Balakrishnan R."/>
            <person name="Costanzo M.C."/>
            <person name="Dwight S.S."/>
            <person name="Hitz B.C."/>
            <person name="Karra K."/>
            <person name="Nash R.S."/>
            <person name="Weng S."/>
            <person name="Wong E.D."/>
            <person name="Lloyd P."/>
            <person name="Skrzypek M.S."/>
            <person name="Miyasato S.R."/>
            <person name="Simison M."/>
            <person name="Cherry J.M."/>
        </authorList>
    </citation>
    <scope>GENOME REANNOTATION</scope>
    <source>
        <strain>ATCC 204508 / S288c</strain>
    </source>
</reference>
<reference key="4">
    <citation type="journal article" date="2007" name="Genome Res.">
        <title>Approaching a complete repository of sequence-verified protein-encoding clones for Saccharomyces cerevisiae.</title>
        <authorList>
            <person name="Hu Y."/>
            <person name="Rolfs A."/>
            <person name="Bhullar B."/>
            <person name="Murthy T.V.S."/>
            <person name="Zhu C."/>
            <person name="Berger M.F."/>
            <person name="Camargo A.A."/>
            <person name="Kelley F."/>
            <person name="McCarron S."/>
            <person name="Jepson D."/>
            <person name="Richardson A."/>
            <person name="Raphael J."/>
            <person name="Moreira D."/>
            <person name="Taycher E."/>
            <person name="Zuo D."/>
            <person name="Mohr S."/>
            <person name="Kane M.F."/>
            <person name="Williamson J."/>
            <person name="Simpson A.J.G."/>
            <person name="Bulyk M.L."/>
            <person name="Harlow E."/>
            <person name="Marsischky G."/>
            <person name="Kolodner R.D."/>
            <person name="LaBaer J."/>
        </authorList>
    </citation>
    <scope>NUCLEOTIDE SEQUENCE [GENOMIC DNA]</scope>
    <source>
        <strain>ATCC 204508 / S288c</strain>
    </source>
</reference>
<reference key="5">
    <citation type="journal article" date="2003" name="Mol. Biol. Cell">
        <title>Interaction with Tap42 is required for the essential function of Sit4 and type 2A phosphatases.</title>
        <authorList>
            <person name="Wang H."/>
            <person name="Wang X."/>
            <person name="Jiang Y."/>
        </authorList>
    </citation>
    <scope>INTERACTION WITH TAP42</scope>
</reference>
<reference key="6">
    <citation type="journal article" date="2003" name="Nature">
        <title>Global analysis of protein expression in yeast.</title>
        <authorList>
            <person name="Ghaemmaghami S."/>
            <person name="Huh W.-K."/>
            <person name="Bower K."/>
            <person name="Howson R.W."/>
            <person name="Belle A."/>
            <person name="Dephoure N."/>
            <person name="O'Shea E.K."/>
            <person name="Weissman J.S."/>
        </authorList>
    </citation>
    <scope>LEVEL OF PROTEIN EXPRESSION [LARGE SCALE ANALYSIS]</scope>
</reference>
<reference key="7">
    <citation type="journal article" date="2005" name="Biochem. J.">
        <title>Specific interactions of PP2A and PP2A-like phosphatases with the yeast PTPA homologues, Ypa1 and Ypa2.</title>
        <authorList>
            <person name="Van Hoof C."/>
            <person name="Martens E."/>
            <person name="Longin S."/>
            <person name="Jordens J."/>
            <person name="Stevens I."/>
            <person name="Janssens V."/>
            <person name="Goris J."/>
        </authorList>
    </citation>
    <scope>INTERACTION WITH PPE1 AND RRD1</scope>
</reference>
<feature type="chain" id="PRO_0000058876" description="Serine/threonine-protein phosphatase PP2A-like PPG1">
    <location>
        <begin position="1"/>
        <end position="368"/>
    </location>
</feature>
<feature type="active site" description="Proton donor" evidence="1">
    <location>
        <position position="111"/>
    </location>
</feature>
<feature type="binding site" evidence="1">
    <location>
        <position position="50"/>
    </location>
    <ligand>
        <name>Mn(2+)</name>
        <dbReference type="ChEBI" id="CHEBI:29035"/>
        <label>1</label>
    </ligand>
</feature>
<feature type="binding site" evidence="1">
    <location>
        <position position="52"/>
    </location>
    <ligand>
        <name>Mn(2+)</name>
        <dbReference type="ChEBI" id="CHEBI:29035"/>
        <label>1</label>
    </ligand>
</feature>
<feature type="binding site" evidence="1">
    <location>
        <position position="78"/>
    </location>
    <ligand>
        <name>Mn(2+)</name>
        <dbReference type="ChEBI" id="CHEBI:29035"/>
        <label>1</label>
    </ligand>
</feature>
<feature type="binding site" evidence="1">
    <location>
        <position position="78"/>
    </location>
    <ligand>
        <name>Mn(2+)</name>
        <dbReference type="ChEBI" id="CHEBI:29035"/>
        <label>2</label>
    </ligand>
</feature>
<feature type="binding site" evidence="1">
    <location>
        <position position="110"/>
    </location>
    <ligand>
        <name>Mn(2+)</name>
        <dbReference type="ChEBI" id="CHEBI:29035"/>
        <label>2</label>
    </ligand>
</feature>
<feature type="binding site" evidence="1">
    <location>
        <position position="161"/>
    </location>
    <ligand>
        <name>Mn(2+)</name>
        <dbReference type="ChEBI" id="CHEBI:29035"/>
        <label>2</label>
    </ligand>
</feature>
<feature type="binding site" evidence="1">
    <location>
        <position position="247"/>
    </location>
    <ligand>
        <name>Mn(2+)</name>
        <dbReference type="ChEBI" id="CHEBI:29035"/>
        <label>2</label>
    </ligand>
</feature>
<feature type="sequence conflict" description="In Ref. 1; AAA34895." evidence="5" ref="1">
    <original>C</original>
    <variation>S</variation>
    <location>
        <position position="126"/>
    </location>
</feature>
<feature type="sequence conflict" description="In Ref. 4; AAS56347." evidence="5" ref="4">
    <original>D</original>
    <variation>G</variation>
    <location>
        <position position="154"/>
    </location>
</feature>